<keyword id="KW-0963">Cytoplasm</keyword>
<keyword id="KW-0227">DNA damage</keyword>
<keyword id="KW-0233">DNA recombination</keyword>
<keyword id="KW-0234">DNA repair</keyword>
<keyword id="KW-0238">DNA-binding</keyword>
<proteinExistence type="inferred from homology"/>
<name>RUVA_BORBZ</name>
<dbReference type="EMBL" id="CP001205">
    <property type="protein sequence ID" value="ACK74910.1"/>
    <property type="molecule type" value="Genomic_DNA"/>
</dbReference>
<dbReference type="RefSeq" id="WP_002658353.1">
    <property type="nucleotide sequence ID" value="NC_011728.1"/>
</dbReference>
<dbReference type="SMR" id="B7J0W2"/>
<dbReference type="GeneID" id="56568192"/>
<dbReference type="KEGG" id="bbz:BbuZS7_0023"/>
<dbReference type="HOGENOM" id="CLU_087936_2_0_12"/>
<dbReference type="Proteomes" id="UP000006901">
    <property type="component" value="Chromosome"/>
</dbReference>
<dbReference type="GO" id="GO:0005737">
    <property type="term" value="C:cytoplasm"/>
    <property type="evidence" value="ECO:0007669"/>
    <property type="project" value="UniProtKB-SubCell"/>
</dbReference>
<dbReference type="GO" id="GO:0048476">
    <property type="term" value="C:Holliday junction resolvase complex"/>
    <property type="evidence" value="ECO:0007669"/>
    <property type="project" value="UniProtKB-UniRule"/>
</dbReference>
<dbReference type="GO" id="GO:0005524">
    <property type="term" value="F:ATP binding"/>
    <property type="evidence" value="ECO:0007669"/>
    <property type="project" value="InterPro"/>
</dbReference>
<dbReference type="GO" id="GO:0000400">
    <property type="term" value="F:four-way junction DNA binding"/>
    <property type="evidence" value="ECO:0007669"/>
    <property type="project" value="UniProtKB-UniRule"/>
</dbReference>
<dbReference type="GO" id="GO:0009378">
    <property type="term" value="F:four-way junction helicase activity"/>
    <property type="evidence" value="ECO:0007669"/>
    <property type="project" value="InterPro"/>
</dbReference>
<dbReference type="GO" id="GO:0006310">
    <property type="term" value="P:DNA recombination"/>
    <property type="evidence" value="ECO:0007669"/>
    <property type="project" value="UniProtKB-UniRule"/>
</dbReference>
<dbReference type="GO" id="GO:0006281">
    <property type="term" value="P:DNA repair"/>
    <property type="evidence" value="ECO:0007669"/>
    <property type="project" value="UniProtKB-UniRule"/>
</dbReference>
<dbReference type="Gene3D" id="1.10.150.20">
    <property type="entry name" value="5' to 3' exonuclease, C-terminal subdomain"/>
    <property type="match status" value="1"/>
</dbReference>
<dbReference type="Gene3D" id="2.40.50.140">
    <property type="entry name" value="Nucleic acid-binding proteins"/>
    <property type="match status" value="1"/>
</dbReference>
<dbReference type="HAMAP" id="MF_00031">
    <property type="entry name" value="DNA_HJ_migration_RuvA"/>
    <property type="match status" value="1"/>
</dbReference>
<dbReference type="InterPro" id="IPR013849">
    <property type="entry name" value="DNA_helicase_Holl-junc_RuvA_I"/>
</dbReference>
<dbReference type="InterPro" id="IPR003583">
    <property type="entry name" value="Hlx-hairpin-Hlx_DNA-bd_motif"/>
</dbReference>
<dbReference type="InterPro" id="IPR012340">
    <property type="entry name" value="NA-bd_OB-fold"/>
</dbReference>
<dbReference type="InterPro" id="IPR000085">
    <property type="entry name" value="RuvA"/>
</dbReference>
<dbReference type="InterPro" id="IPR010994">
    <property type="entry name" value="RuvA_2-like"/>
</dbReference>
<dbReference type="NCBIfam" id="TIGR00084">
    <property type="entry name" value="ruvA"/>
    <property type="match status" value="1"/>
</dbReference>
<dbReference type="Pfam" id="PF14520">
    <property type="entry name" value="HHH_5"/>
    <property type="match status" value="1"/>
</dbReference>
<dbReference type="Pfam" id="PF01330">
    <property type="entry name" value="RuvA_N"/>
    <property type="match status" value="1"/>
</dbReference>
<dbReference type="SMART" id="SM00278">
    <property type="entry name" value="HhH1"/>
    <property type="match status" value="2"/>
</dbReference>
<dbReference type="SUPFAM" id="SSF50249">
    <property type="entry name" value="Nucleic acid-binding proteins"/>
    <property type="match status" value="1"/>
</dbReference>
<dbReference type="SUPFAM" id="SSF47781">
    <property type="entry name" value="RuvA domain 2-like"/>
    <property type="match status" value="1"/>
</dbReference>
<protein>
    <recommendedName>
        <fullName evidence="1">Holliday junction branch migration complex subunit RuvA</fullName>
    </recommendedName>
</protein>
<comment type="function">
    <text evidence="1">The RuvA-RuvB-RuvC complex processes Holliday junction (HJ) DNA during genetic recombination and DNA repair, while the RuvA-RuvB complex plays an important role in the rescue of blocked DNA replication forks via replication fork reversal (RFR). RuvA specifically binds to HJ cruciform DNA, conferring on it an open structure. The RuvB hexamer acts as an ATP-dependent pump, pulling dsDNA into and through the RuvAB complex. HJ branch migration allows RuvC to scan DNA until it finds its consensus sequence, where it cleaves and resolves the cruciform DNA.</text>
</comment>
<comment type="subunit">
    <text evidence="1">Homotetramer. Forms an RuvA(8)-RuvB(12)-Holliday junction (HJ) complex. HJ DNA is sandwiched between 2 RuvA tetramers; dsDNA enters through RuvA and exits via RuvB. An RuvB hexamer assembles on each DNA strand where it exits the tetramer. Each RuvB hexamer is contacted by two RuvA subunits (via domain III) on 2 adjacent RuvB subunits; this complex drives branch migration. In the full resolvosome a probable DNA-RuvA(4)-RuvB(12)-RuvC(2) complex forms which resolves the HJ.</text>
</comment>
<comment type="subcellular location">
    <subcellularLocation>
        <location evidence="1">Cytoplasm</location>
    </subcellularLocation>
</comment>
<comment type="domain">
    <text evidence="1">Has three domains with a flexible linker between the domains II and III and assumes an 'L' shape. Domain III is highly mobile and contacts RuvB.</text>
</comment>
<comment type="similarity">
    <text evidence="1">Belongs to the RuvA family.</text>
</comment>
<reference key="1">
    <citation type="journal article" date="2011" name="J. Bacteriol.">
        <title>Whole-genome sequences of thirteen isolates of Borrelia burgdorferi.</title>
        <authorList>
            <person name="Schutzer S.E."/>
            <person name="Fraser-Liggett C.M."/>
            <person name="Casjens S.R."/>
            <person name="Qiu W.G."/>
            <person name="Dunn J.J."/>
            <person name="Mongodin E.F."/>
            <person name="Luft B.J."/>
        </authorList>
    </citation>
    <scope>NUCLEOTIDE SEQUENCE [LARGE SCALE GENOMIC DNA]</scope>
    <source>
        <strain>ZS7</strain>
    </source>
</reference>
<gene>
    <name evidence="1" type="primary">ruvA</name>
    <name type="ordered locus">BbuZS7_0023</name>
</gene>
<evidence type="ECO:0000255" key="1">
    <source>
        <dbReference type="HAMAP-Rule" id="MF_00031"/>
    </source>
</evidence>
<accession>B7J0W2</accession>
<sequence length="197" mass="22688">MINKIHGKVIEKKESSLVLMTTVFEFELLVSAFCLANFNLSDKVELFTYLYTRENELKLFGFLNSDEREIFKELIGVSGVGPRAALRVLSNIRYNEFKEAIDKEDIELVSKIKGIGKKMAGKMFLHLQGKLLINSELESTGLFRFKELEESIVSMGFDRKIVNSKIREAFNLAEFANLKDSEKEQFLFKEVLKRISN</sequence>
<feature type="chain" id="PRO_1000195121" description="Holliday junction branch migration complex subunit RuvA">
    <location>
        <begin position="1"/>
        <end position="197"/>
    </location>
</feature>
<feature type="region of interest" description="Domain I" evidence="1">
    <location>
        <begin position="1"/>
        <end position="63"/>
    </location>
</feature>
<feature type="region of interest" description="Domain II" evidence="1">
    <location>
        <begin position="64"/>
        <end position="139"/>
    </location>
</feature>
<feature type="region of interest" description="Flexible linker" evidence="1">
    <location>
        <position position="139"/>
    </location>
</feature>
<feature type="region of interest" description="Domain III" evidence="1">
    <location>
        <begin position="140"/>
        <end position="197"/>
    </location>
</feature>
<organism>
    <name type="scientific">Borreliella burgdorferi (strain ZS7)</name>
    <name type="common">Borrelia burgdorferi</name>
    <dbReference type="NCBI Taxonomy" id="445985"/>
    <lineage>
        <taxon>Bacteria</taxon>
        <taxon>Pseudomonadati</taxon>
        <taxon>Spirochaetota</taxon>
        <taxon>Spirochaetia</taxon>
        <taxon>Spirochaetales</taxon>
        <taxon>Borreliaceae</taxon>
        <taxon>Borreliella</taxon>
    </lineage>
</organism>